<accession>B0CD57</accession>
<organism>
    <name type="scientific">Acaryochloris marina (strain MBIC 11017)</name>
    <dbReference type="NCBI Taxonomy" id="329726"/>
    <lineage>
        <taxon>Bacteria</taxon>
        <taxon>Bacillati</taxon>
        <taxon>Cyanobacteriota</taxon>
        <taxon>Cyanophyceae</taxon>
        <taxon>Acaryochloridales</taxon>
        <taxon>Acaryochloridaceae</taxon>
        <taxon>Acaryochloris</taxon>
    </lineage>
</organism>
<gene>
    <name evidence="1" type="primary">glyS</name>
    <name type="ordered locus">AM1_0598</name>
</gene>
<feature type="chain" id="PRO_1000078538" description="Glycine--tRNA ligase beta subunit">
    <location>
        <begin position="1"/>
        <end position="712"/>
    </location>
</feature>
<protein>
    <recommendedName>
        <fullName evidence="1">Glycine--tRNA ligase beta subunit</fullName>
        <ecNumber evidence="1">6.1.1.14</ecNumber>
    </recommendedName>
    <alternativeName>
        <fullName evidence="1">Glycyl-tRNA synthetase beta subunit</fullName>
        <shortName evidence="1">GlyRS</shortName>
    </alternativeName>
</protein>
<evidence type="ECO:0000255" key="1">
    <source>
        <dbReference type="HAMAP-Rule" id="MF_00255"/>
    </source>
</evidence>
<proteinExistence type="inferred from homology"/>
<keyword id="KW-0030">Aminoacyl-tRNA synthetase</keyword>
<keyword id="KW-0067">ATP-binding</keyword>
<keyword id="KW-0963">Cytoplasm</keyword>
<keyword id="KW-0436">Ligase</keyword>
<keyword id="KW-0547">Nucleotide-binding</keyword>
<keyword id="KW-0648">Protein biosynthesis</keyword>
<keyword id="KW-1185">Reference proteome</keyword>
<reference key="1">
    <citation type="journal article" date="2008" name="Proc. Natl. Acad. Sci. U.S.A.">
        <title>Niche adaptation and genome expansion in the chlorophyll d-producing cyanobacterium Acaryochloris marina.</title>
        <authorList>
            <person name="Swingley W.D."/>
            <person name="Chen M."/>
            <person name="Cheung P.C."/>
            <person name="Conrad A.L."/>
            <person name="Dejesa L.C."/>
            <person name="Hao J."/>
            <person name="Honchak B.M."/>
            <person name="Karbach L.E."/>
            <person name="Kurdoglu A."/>
            <person name="Lahiri S."/>
            <person name="Mastrian S.D."/>
            <person name="Miyashita H."/>
            <person name="Page L."/>
            <person name="Ramakrishna P."/>
            <person name="Satoh S."/>
            <person name="Sattley W.M."/>
            <person name="Shimada Y."/>
            <person name="Taylor H.L."/>
            <person name="Tomo T."/>
            <person name="Tsuchiya T."/>
            <person name="Wang Z.T."/>
            <person name="Raymond J."/>
            <person name="Mimuro M."/>
            <person name="Blankenship R.E."/>
            <person name="Touchman J.W."/>
        </authorList>
    </citation>
    <scope>NUCLEOTIDE SEQUENCE [LARGE SCALE GENOMIC DNA]</scope>
    <source>
        <strain>MBIC 11017</strain>
    </source>
</reference>
<dbReference type="EC" id="6.1.1.14" evidence="1"/>
<dbReference type="EMBL" id="CP000828">
    <property type="protein sequence ID" value="ABW25648.1"/>
    <property type="molecule type" value="Genomic_DNA"/>
</dbReference>
<dbReference type="RefSeq" id="WP_012161247.1">
    <property type="nucleotide sequence ID" value="NC_009925.1"/>
</dbReference>
<dbReference type="SMR" id="B0CD57"/>
<dbReference type="STRING" id="329726.AM1_0598"/>
<dbReference type="KEGG" id="amr:AM1_0598"/>
<dbReference type="eggNOG" id="COG0751">
    <property type="taxonomic scope" value="Bacteria"/>
</dbReference>
<dbReference type="HOGENOM" id="CLU_007220_2_2_3"/>
<dbReference type="OrthoDB" id="9775440at2"/>
<dbReference type="Proteomes" id="UP000000268">
    <property type="component" value="Chromosome"/>
</dbReference>
<dbReference type="GO" id="GO:0005829">
    <property type="term" value="C:cytosol"/>
    <property type="evidence" value="ECO:0007669"/>
    <property type="project" value="TreeGrafter"/>
</dbReference>
<dbReference type="GO" id="GO:0005524">
    <property type="term" value="F:ATP binding"/>
    <property type="evidence" value="ECO:0007669"/>
    <property type="project" value="UniProtKB-UniRule"/>
</dbReference>
<dbReference type="GO" id="GO:0004820">
    <property type="term" value="F:glycine-tRNA ligase activity"/>
    <property type="evidence" value="ECO:0007669"/>
    <property type="project" value="UniProtKB-UniRule"/>
</dbReference>
<dbReference type="GO" id="GO:0006426">
    <property type="term" value="P:glycyl-tRNA aminoacylation"/>
    <property type="evidence" value="ECO:0007669"/>
    <property type="project" value="UniProtKB-UniRule"/>
</dbReference>
<dbReference type="HAMAP" id="MF_00255">
    <property type="entry name" value="Gly_tRNA_synth_beta"/>
    <property type="match status" value="1"/>
</dbReference>
<dbReference type="InterPro" id="IPR015944">
    <property type="entry name" value="Gly-tRNA-synth_bsu"/>
</dbReference>
<dbReference type="InterPro" id="IPR006194">
    <property type="entry name" value="Gly-tRNA-synth_heterodimer"/>
</dbReference>
<dbReference type="NCBIfam" id="TIGR00211">
    <property type="entry name" value="glyS"/>
    <property type="match status" value="1"/>
</dbReference>
<dbReference type="PANTHER" id="PTHR30075:SF2">
    <property type="entry name" value="GLYCINE--TRNA LIGASE, CHLOROPLASTIC_MITOCHONDRIAL 2"/>
    <property type="match status" value="1"/>
</dbReference>
<dbReference type="PANTHER" id="PTHR30075">
    <property type="entry name" value="GLYCYL-TRNA SYNTHETASE"/>
    <property type="match status" value="1"/>
</dbReference>
<dbReference type="Pfam" id="PF02092">
    <property type="entry name" value="tRNA_synt_2f"/>
    <property type="match status" value="1"/>
</dbReference>
<dbReference type="PRINTS" id="PR01045">
    <property type="entry name" value="TRNASYNTHGB"/>
</dbReference>
<dbReference type="SUPFAM" id="SSF109604">
    <property type="entry name" value="HD-domain/PDEase-like"/>
    <property type="match status" value="1"/>
</dbReference>
<dbReference type="PROSITE" id="PS50861">
    <property type="entry name" value="AA_TRNA_LIGASE_II_GLYAB"/>
    <property type="match status" value="1"/>
</dbReference>
<comment type="catalytic activity">
    <reaction evidence="1">
        <text>tRNA(Gly) + glycine + ATP = glycyl-tRNA(Gly) + AMP + diphosphate</text>
        <dbReference type="Rhea" id="RHEA:16013"/>
        <dbReference type="Rhea" id="RHEA-COMP:9664"/>
        <dbReference type="Rhea" id="RHEA-COMP:9683"/>
        <dbReference type="ChEBI" id="CHEBI:30616"/>
        <dbReference type="ChEBI" id="CHEBI:33019"/>
        <dbReference type="ChEBI" id="CHEBI:57305"/>
        <dbReference type="ChEBI" id="CHEBI:78442"/>
        <dbReference type="ChEBI" id="CHEBI:78522"/>
        <dbReference type="ChEBI" id="CHEBI:456215"/>
        <dbReference type="EC" id="6.1.1.14"/>
    </reaction>
</comment>
<comment type="subunit">
    <text evidence="1">Tetramer of two alpha and two beta subunits.</text>
</comment>
<comment type="subcellular location">
    <subcellularLocation>
        <location evidence="1">Cytoplasm</location>
    </subcellularLocation>
</comment>
<comment type="similarity">
    <text evidence="1">Belongs to the class-II aminoacyl-tRNA synthetase family.</text>
</comment>
<sequence length="712" mass="78676">MATFLLEVGTEELPASFVESAIQQWRSHIPNSLEEHLLTPQSLKVYGTPRRLAILAEGLPDQQPDQTVEVKGPPAKAAFKDGKPTKAAEGFARKQGVEIKDFELRDTEKGEFIFVQKTTLGKPAVDVLADLIPTWIFSLEGKRFMRWSDGEVKFSRPIRWLVSLLDDHLIPIKLENSTGTISSDRTSSGHRVLHPDPVTIKHPQDYVATLEKASVQVDPEQRQTLIKEQVHACAKAVKGKAVISEDLLAEVTYLVEWPTAVVGGFESEFLELPAEVITTEMVSHQRYFPVEAPKGAKLLPHFITISNGDPAKSDIISSGNERVIRARLADGQFFYKADQAMPLAEYLPKLETVTFQEDLGSVRAKVDRIQANALWVAKQLQLDQKVTQQVERAAQLCKADLVTQMVGEFPELQGVMGEKYAIASGEPTEIATAIVEHYLPKGANDQLPQTLVGQIVGIADRLDTLVSIFGLGMIPTGSSDPFALRRAANAILNIVWAANLDLNLDQLLTETTAAFAQTFAKFQPEVQQLRDFFGQRLRSLLQDEQTIDYDLVNAVLGEKGEHTQRVLVDVLDGRDRAQYLQTIRTNGTLDTIYETVNRAARLATKGDLASDVLDPKGVVQPKLFEQSSEQVFYDGLLTLLPQTQAAQSSRDYQKLVQGLTKIAPSVSQFFDGDDSVLVIAEDADLRANRLNLLGLLRNHALVLGDFGAIVKS</sequence>
<name>SYGB_ACAM1</name>